<feature type="signal peptide" evidence="1">
    <location>
        <begin position="1"/>
        <end position="21"/>
    </location>
</feature>
<feature type="chain" id="PRO_0000336608" description="Outer-membrane lipoprotein LolB">
    <location>
        <begin position="22"/>
        <end position="203"/>
    </location>
</feature>
<feature type="lipid moiety-binding region" description="N-palmitoyl cysteine" evidence="1">
    <location>
        <position position="22"/>
    </location>
</feature>
<feature type="lipid moiety-binding region" description="S-diacylglycerol cysteine" evidence="1">
    <location>
        <position position="22"/>
    </location>
</feature>
<protein>
    <recommendedName>
        <fullName evidence="1">Outer-membrane lipoprotein LolB</fullName>
    </recommendedName>
</protein>
<evidence type="ECO:0000255" key="1">
    <source>
        <dbReference type="HAMAP-Rule" id="MF_00233"/>
    </source>
</evidence>
<organism>
    <name type="scientific">Halorhodospira halophila (strain DSM 244 / SL1)</name>
    <name type="common">Ectothiorhodospira halophila (strain DSM 244 / SL1)</name>
    <dbReference type="NCBI Taxonomy" id="349124"/>
    <lineage>
        <taxon>Bacteria</taxon>
        <taxon>Pseudomonadati</taxon>
        <taxon>Pseudomonadota</taxon>
        <taxon>Gammaproteobacteria</taxon>
        <taxon>Chromatiales</taxon>
        <taxon>Ectothiorhodospiraceae</taxon>
        <taxon>Halorhodospira</taxon>
    </lineage>
</organism>
<dbReference type="EMBL" id="CP000544">
    <property type="protein sequence ID" value="ABM61767.1"/>
    <property type="molecule type" value="Genomic_DNA"/>
</dbReference>
<dbReference type="RefSeq" id="WP_011813790.1">
    <property type="nucleotide sequence ID" value="NC_008789.1"/>
</dbReference>
<dbReference type="SMR" id="A1WVQ5"/>
<dbReference type="STRING" id="349124.Hhal_0991"/>
<dbReference type="KEGG" id="hha:Hhal_0991"/>
<dbReference type="eggNOG" id="COG3017">
    <property type="taxonomic scope" value="Bacteria"/>
</dbReference>
<dbReference type="HOGENOM" id="CLU_092816_2_1_6"/>
<dbReference type="Proteomes" id="UP000000647">
    <property type="component" value="Chromosome"/>
</dbReference>
<dbReference type="GO" id="GO:0009279">
    <property type="term" value="C:cell outer membrane"/>
    <property type="evidence" value="ECO:0007669"/>
    <property type="project" value="UniProtKB-SubCell"/>
</dbReference>
<dbReference type="GO" id="GO:0044874">
    <property type="term" value="P:lipoprotein localization to outer membrane"/>
    <property type="evidence" value="ECO:0007669"/>
    <property type="project" value="UniProtKB-UniRule"/>
</dbReference>
<dbReference type="GO" id="GO:0015031">
    <property type="term" value="P:protein transport"/>
    <property type="evidence" value="ECO:0007669"/>
    <property type="project" value="UniProtKB-KW"/>
</dbReference>
<dbReference type="CDD" id="cd16326">
    <property type="entry name" value="LolB"/>
    <property type="match status" value="1"/>
</dbReference>
<dbReference type="Gene3D" id="2.50.20.10">
    <property type="entry name" value="Lipoprotein localisation LolA/LolB/LppX"/>
    <property type="match status" value="1"/>
</dbReference>
<dbReference type="HAMAP" id="MF_00233">
    <property type="entry name" value="LolB"/>
    <property type="match status" value="1"/>
</dbReference>
<dbReference type="InterPro" id="IPR029046">
    <property type="entry name" value="LolA/LolB/LppX"/>
</dbReference>
<dbReference type="InterPro" id="IPR004565">
    <property type="entry name" value="OM_lipoprot_LolB"/>
</dbReference>
<dbReference type="NCBIfam" id="TIGR00548">
    <property type="entry name" value="lolB"/>
    <property type="match status" value="1"/>
</dbReference>
<dbReference type="Pfam" id="PF03550">
    <property type="entry name" value="LolB"/>
    <property type="match status" value="1"/>
</dbReference>
<dbReference type="SUPFAM" id="SSF89392">
    <property type="entry name" value="Prokaryotic lipoproteins and lipoprotein localization factors"/>
    <property type="match status" value="1"/>
</dbReference>
<dbReference type="PROSITE" id="PS51257">
    <property type="entry name" value="PROKAR_LIPOPROTEIN"/>
    <property type="match status" value="1"/>
</dbReference>
<reference key="1">
    <citation type="submission" date="2006-12" db="EMBL/GenBank/DDBJ databases">
        <title>Complete sequence of Halorhodospira halophila SL1.</title>
        <authorList>
            <consortium name="US DOE Joint Genome Institute"/>
            <person name="Copeland A."/>
            <person name="Lucas S."/>
            <person name="Lapidus A."/>
            <person name="Barry K."/>
            <person name="Detter J.C."/>
            <person name="Glavina del Rio T."/>
            <person name="Hammon N."/>
            <person name="Israni S."/>
            <person name="Dalin E."/>
            <person name="Tice H."/>
            <person name="Pitluck S."/>
            <person name="Saunders E."/>
            <person name="Brettin T."/>
            <person name="Bruce D."/>
            <person name="Han C."/>
            <person name="Tapia R."/>
            <person name="Schmutz J."/>
            <person name="Larimer F."/>
            <person name="Land M."/>
            <person name="Hauser L."/>
            <person name="Kyrpides N."/>
            <person name="Mikhailova N."/>
            <person name="Hoff W."/>
            <person name="Richardson P."/>
        </authorList>
    </citation>
    <scope>NUCLEOTIDE SEQUENCE [LARGE SCALE GENOMIC DNA]</scope>
    <source>
        <strain>DSM 244 / SL1</strain>
    </source>
</reference>
<gene>
    <name evidence="1" type="primary">lolB</name>
    <name type="ordered locus">Hhal_0991</name>
</gene>
<proteinExistence type="inferred from homology"/>
<name>LOLB_HALHL</name>
<sequence length="203" mass="22106">MTGRWSPRLLAGLLAALVLSGCALLVPEDEREAQYEAFLEERAELRDWSVAGRAALRAEGEAVSLSLRWEQRGEVYTINLSGPFGAGAVRIEGQPGRVTLRDGAGQSATAQSPEELLAAQTGHQLPVTALRDWIVGRPADGLEVDELSLDRVGRPDRLEQAGWRVDFQGWTDVDGVDLPSRVDLTRGSTQMRVALSGWSRSDD</sequence>
<keyword id="KW-0998">Cell outer membrane</keyword>
<keyword id="KW-0143">Chaperone</keyword>
<keyword id="KW-0449">Lipoprotein</keyword>
<keyword id="KW-0472">Membrane</keyword>
<keyword id="KW-0564">Palmitate</keyword>
<keyword id="KW-0653">Protein transport</keyword>
<keyword id="KW-1185">Reference proteome</keyword>
<keyword id="KW-0732">Signal</keyword>
<keyword id="KW-0813">Transport</keyword>
<accession>A1WVQ5</accession>
<comment type="function">
    <text evidence="1">Plays a critical role in the incorporation of lipoproteins in the outer membrane after they are released by the LolA protein.</text>
</comment>
<comment type="subunit">
    <text evidence="1">Monomer.</text>
</comment>
<comment type="subcellular location">
    <subcellularLocation>
        <location evidence="1">Cell outer membrane</location>
        <topology evidence="1">Lipid-anchor</topology>
    </subcellularLocation>
</comment>
<comment type="similarity">
    <text evidence="1">Belongs to the LolB family.</text>
</comment>